<proteinExistence type="inferred from homology"/>
<organism>
    <name type="scientific">Beijerinckia indica subsp. indica (strain ATCC 9039 / DSM 1715 / NCIMB 8712)</name>
    <dbReference type="NCBI Taxonomy" id="395963"/>
    <lineage>
        <taxon>Bacteria</taxon>
        <taxon>Pseudomonadati</taxon>
        <taxon>Pseudomonadota</taxon>
        <taxon>Alphaproteobacteria</taxon>
        <taxon>Hyphomicrobiales</taxon>
        <taxon>Beijerinckiaceae</taxon>
        <taxon>Beijerinckia</taxon>
    </lineage>
</organism>
<feature type="chain" id="PRO_1000120589" description="Small ribosomal subunit protein bS21">
    <location>
        <begin position="1"/>
        <end position="79"/>
    </location>
</feature>
<feature type="region of interest" description="Disordered" evidence="2">
    <location>
        <begin position="58"/>
        <end position="79"/>
    </location>
</feature>
<evidence type="ECO:0000255" key="1">
    <source>
        <dbReference type="HAMAP-Rule" id="MF_00358"/>
    </source>
</evidence>
<evidence type="ECO:0000256" key="2">
    <source>
        <dbReference type="SAM" id="MobiDB-lite"/>
    </source>
</evidence>
<evidence type="ECO:0000305" key="3"/>
<dbReference type="EMBL" id="CP001016">
    <property type="protein sequence ID" value="ACB93972.1"/>
    <property type="molecule type" value="Genomic_DNA"/>
</dbReference>
<dbReference type="RefSeq" id="WP_012383330.1">
    <property type="nucleotide sequence ID" value="NC_010581.1"/>
</dbReference>
<dbReference type="SMR" id="B2IDB5"/>
<dbReference type="STRING" id="395963.Bind_0318"/>
<dbReference type="KEGG" id="bid:Bind_0318"/>
<dbReference type="eggNOG" id="COG0828">
    <property type="taxonomic scope" value="Bacteria"/>
</dbReference>
<dbReference type="HOGENOM" id="CLU_159258_0_1_5"/>
<dbReference type="OrthoDB" id="9811907at2"/>
<dbReference type="Proteomes" id="UP000001695">
    <property type="component" value="Chromosome"/>
</dbReference>
<dbReference type="GO" id="GO:1990904">
    <property type="term" value="C:ribonucleoprotein complex"/>
    <property type="evidence" value="ECO:0007669"/>
    <property type="project" value="UniProtKB-KW"/>
</dbReference>
<dbReference type="GO" id="GO:0005840">
    <property type="term" value="C:ribosome"/>
    <property type="evidence" value="ECO:0007669"/>
    <property type="project" value="UniProtKB-KW"/>
</dbReference>
<dbReference type="GO" id="GO:0003735">
    <property type="term" value="F:structural constituent of ribosome"/>
    <property type="evidence" value="ECO:0007669"/>
    <property type="project" value="InterPro"/>
</dbReference>
<dbReference type="GO" id="GO:0006412">
    <property type="term" value="P:translation"/>
    <property type="evidence" value="ECO:0007669"/>
    <property type="project" value="UniProtKB-UniRule"/>
</dbReference>
<dbReference type="Gene3D" id="1.20.5.1150">
    <property type="entry name" value="Ribosomal protein S8"/>
    <property type="match status" value="1"/>
</dbReference>
<dbReference type="HAMAP" id="MF_00358">
    <property type="entry name" value="Ribosomal_bS21"/>
    <property type="match status" value="1"/>
</dbReference>
<dbReference type="InterPro" id="IPR001911">
    <property type="entry name" value="Ribosomal_bS21"/>
</dbReference>
<dbReference type="InterPro" id="IPR018278">
    <property type="entry name" value="Ribosomal_bS21_CS"/>
</dbReference>
<dbReference type="InterPro" id="IPR038380">
    <property type="entry name" value="Ribosomal_bS21_sf"/>
</dbReference>
<dbReference type="NCBIfam" id="TIGR00030">
    <property type="entry name" value="S21p"/>
    <property type="match status" value="1"/>
</dbReference>
<dbReference type="PANTHER" id="PTHR21109">
    <property type="entry name" value="MITOCHONDRIAL 28S RIBOSOMAL PROTEIN S21"/>
    <property type="match status" value="1"/>
</dbReference>
<dbReference type="PANTHER" id="PTHR21109:SF0">
    <property type="entry name" value="SMALL RIBOSOMAL SUBUNIT PROTEIN BS21M"/>
    <property type="match status" value="1"/>
</dbReference>
<dbReference type="Pfam" id="PF01165">
    <property type="entry name" value="Ribosomal_S21"/>
    <property type="match status" value="1"/>
</dbReference>
<dbReference type="PRINTS" id="PR00976">
    <property type="entry name" value="RIBOSOMALS21"/>
</dbReference>
<dbReference type="PROSITE" id="PS01181">
    <property type="entry name" value="RIBOSOMAL_S21"/>
    <property type="match status" value="1"/>
</dbReference>
<gene>
    <name evidence="1" type="primary">rpsU</name>
    <name type="ordered locus">Bind_0318</name>
</gene>
<sequence length="79" mass="9425">MQVLVRDNNVDQALKALKKKMQREGIFREMKLRGYYEKPSEKRAREKAEAVRRARKLARKKMQREGLLPMKPKPMPGMR</sequence>
<accession>B2IDB5</accession>
<keyword id="KW-1185">Reference proteome</keyword>
<keyword id="KW-0687">Ribonucleoprotein</keyword>
<keyword id="KW-0689">Ribosomal protein</keyword>
<reference key="1">
    <citation type="journal article" date="2010" name="J. Bacteriol.">
        <title>Complete genome sequence of Beijerinckia indica subsp. indica.</title>
        <authorList>
            <person name="Tamas I."/>
            <person name="Dedysh S.N."/>
            <person name="Liesack W."/>
            <person name="Stott M.B."/>
            <person name="Alam M."/>
            <person name="Murrell J.C."/>
            <person name="Dunfield P.F."/>
        </authorList>
    </citation>
    <scope>NUCLEOTIDE SEQUENCE [LARGE SCALE GENOMIC DNA]</scope>
    <source>
        <strain>ATCC 9039 / DSM 1715 / NCIMB 8712</strain>
    </source>
</reference>
<protein>
    <recommendedName>
        <fullName evidence="1">Small ribosomal subunit protein bS21</fullName>
    </recommendedName>
    <alternativeName>
        <fullName evidence="3">30S ribosomal protein S21</fullName>
    </alternativeName>
</protein>
<comment type="similarity">
    <text evidence="1">Belongs to the bacterial ribosomal protein bS21 family.</text>
</comment>
<name>RS21_BEII9</name>